<reference key="1">
    <citation type="journal article" date="2004" name="Proc. Natl. Acad. Sci. U.S.A.">
        <title>Complete genomes of two clinical Staphylococcus aureus strains: evidence for the rapid evolution of virulence and drug resistance.</title>
        <authorList>
            <person name="Holden M.T.G."/>
            <person name="Feil E.J."/>
            <person name="Lindsay J.A."/>
            <person name="Peacock S.J."/>
            <person name="Day N.P.J."/>
            <person name="Enright M.C."/>
            <person name="Foster T.J."/>
            <person name="Moore C.E."/>
            <person name="Hurst L."/>
            <person name="Atkin R."/>
            <person name="Barron A."/>
            <person name="Bason N."/>
            <person name="Bentley S.D."/>
            <person name="Chillingworth C."/>
            <person name="Chillingworth T."/>
            <person name="Churcher C."/>
            <person name="Clark L."/>
            <person name="Corton C."/>
            <person name="Cronin A."/>
            <person name="Doggett J."/>
            <person name="Dowd L."/>
            <person name="Feltwell T."/>
            <person name="Hance Z."/>
            <person name="Harris B."/>
            <person name="Hauser H."/>
            <person name="Holroyd S."/>
            <person name="Jagels K."/>
            <person name="James K.D."/>
            <person name="Lennard N."/>
            <person name="Line A."/>
            <person name="Mayes R."/>
            <person name="Moule S."/>
            <person name="Mungall K."/>
            <person name="Ormond D."/>
            <person name="Quail M.A."/>
            <person name="Rabbinowitsch E."/>
            <person name="Rutherford K.M."/>
            <person name="Sanders M."/>
            <person name="Sharp S."/>
            <person name="Simmonds M."/>
            <person name="Stevens K."/>
            <person name="Whitehead S."/>
            <person name="Barrell B.G."/>
            <person name="Spratt B.G."/>
            <person name="Parkhill J."/>
        </authorList>
    </citation>
    <scope>NUCLEOTIDE SEQUENCE [LARGE SCALE GENOMIC DNA]</scope>
    <source>
        <strain>MSSA476</strain>
    </source>
</reference>
<name>Y782_STAAS</name>
<protein>
    <recommendedName>
        <fullName>UPF0337 protein SAS0782</fullName>
    </recommendedName>
</protein>
<proteinExistence type="inferred from homology"/>
<accession>Q6GB15</accession>
<sequence>MADESKFEQAKGNVKETVGNVTDNKNLENEGKEDKASGKAKEFVENAKEKATDFIDKVKGNKGE</sequence>
<evidence type="ECO:0000256" key="1">
    <source>
        <dbReference type="SAM" id="MobiDB-lite"/>
    </source>
</evidence>
<evidence type="ECO:0000305" key="2"/>
<dbReference type="EMBL" id="BX571857">
    <property type="protein sequence ID" value="CAG42556.1"/>
    <property type="molecule type" value="Genomic_DNA"/>
</dbReference>
<dbReference type="RefSeq" id="WP_000752917.1">
    <property type="nucleotide sequence ID" value="NC_002953.3"/>
</dbReference>
<dbReference type="SMR" id="Q6GB15"/>
<dbReference type="KEGG" id="sas:SAS0782"/>
<dbReference type="HOGENOM" id="CLU_135567_0_3_9"/>
<dbReference type="Gene3D" id="1.10.1470.10">
    <property type="entry name" value="YjbJ"/>
    <property type="match status" value="1"/>
</dbReference>
<dbReference type="InterPro" id="IPR008462">
    <property type="entry name" value="CsbD"/>
</dbReference>
<dbReference type="InterPro" id="IPR050423">
    <property type="entry name" value="UPF0337_stress_rsp"/>
</dbReference>
<dbReference type="InterPro" id="IPR036629">
    <property type="entry name" value="YjbJ_sf"/>
</dbReference>
<dbReference type="PANTHER" id="PTHR34977">
    <property type="entry name" value="UPF0337 PROTEIN YJBJ"/>
    <property type="match status" value="1"/>
</dbReference>
<dbReference type="PANTHER" id="PTHR34977:SF1">
    <property type="entry name" value="UPF0337 PROTEIN YJBJ"/>
    <property type="match status" value="1"/>
</dbReference>
<dbReference type="Pfam" id="PF05532">
    <property type="entry name" value="CsbD"/>
    <property type="match status" value="1"/>
</dbReference>
<dbReference type="SUPFAM" id="SSF69047">
    <property type="entry name" value="Hypothetical protein YjbJ"/>
    <property type="match status" value="1"/>
</dbReference>
<comment type="similarity">
    <text evidence="2">Belongs to the UPF0337 (CsbD) family.</text>
</comment>
<feature type="chain" id="PRO_0000272674" description="UPF0337 protein SAS0782">
    <location>
        <begin position="1"/>
        <end position="64"/>
    </location>
</feature>
<feature type="region of interest" description="Disordered" evidence="1">
    <location>
        <begin position="1"/>
        <end position="40"/>
    </location>
</feature>
<feature type="compositionally biased region" description="Basic and acidic residues" evidence="1">
    <location>
        <begin position="25"/>
        <end position="40"/>
    </location>
</feature>
<gene>
    <name type="ordered locus">SAS0782</name>
</gene>
<organism>
    <name type="scientific">Staphylococcus aureus (strain MSSA476)</name>
    <dbReference type="NCBI Taxonomy" id="282459"/>
    <lineage>
        <taxon>Bacteria</taxon>
        <taxon>Bacillati</taxon>
        <taxon>Bacillota</taxon>
        <taxon>Bacilli</taxon>
        <taxon>Bacillales</taxon>
        <taxon>Staphylococcaceae</taxon>
        <taxon>Staphylococcus</taxon>
    </lineage>
</organism>